<name>BRE1B_MACFA</name>
<gene>
    <name type="primary">RNF40</name>
    <name type="synonym">BRE1B</name>
    <name type="ORF">QtsA-14984</name>
</gene>
<reference key="1">
    <citation type="submission" date="2005-06" db="EMBL/GenBank/DDBJ databases">
        <title>DNA sequences of macaque genes expressed in brain or testis and its evolutionary implications.</title>
        <authorList>
            <consortium name="International consortium for macaque cDNA sequencing and analysis"/>
        </authorList>
    </citation>
    <scope>NUCLEOTIDE SEQUENCE [LARGE SCALE MRNA]</scope>
    <source>
        <tissue>Testis</tissue>
    </source>
</reference>
<proteinExistence type="evidence at transcript level"/>
<organism>
    <name type="scientific">Macaca fascicularis</name>
    <name type="common">Crab-eating macaque</name>
    <name type="synonym">Cynomolgus monkey</name>
    <dbReference type="NCBI Taxonomy" id="9541"/>
    <lineage>
        <taxon>Eukaryota</taxon>
        <taxon>Metazoa</taxon>
        <taxon>Chordata</taxon>
        <taxon>Craniata</taxon>
        <taxon>Vertebrata</taxon>
        <taxon>Euteleostomi</taxon>
        <taxon>Mammalia</taxon>
        <taxon>Eutheria</taxon>
        <taxon>Euarchontoglires</taxon>
        <taxon>Primates</taxon>
        <taxon>Haplorrhini</taxon>
        <taxon>Catarrhini</taxon>
        <taxon>Cercopithecidae</taxon>
        <taxon>Cercopithecinae</taxon>
        <taxon>Macaca</taxon>
    </lineage>
</organism>
<feature type="chain" id="PRO_0000055840" description="E3 ubiquitin-protein ligase BRE1B">
    <location>
        <begin position="1"/>
        <end position="1001"/>
    </location>
</feature>
<feature type="zinc finger region" description="RING-type" evidence="5">
    <location>
        <begin position="948"/>
        <end position="987"/>
    </location>
</feature>
<feature type="region of interest" description="Disordered" evidence="6">
    <location>
        <begin position="1"/>
        <end position="31"/>
    </location>
</feature>
<feature type="region of interest" description="Disordered" evidence="6">
    <location>
        <begin position="116"/>
        <end position="149"/>
    </location>
</feature>
<feature type="region of interest" description="Disordered" evidence="6">
    <location>
        <begin position="516"/>
        <end position="646"/>
    </location>
</feature>
<feature type="coiled-coil region" evidence="4">
    <location>
        <begin position="45"/>
        <end position="91"/>
    </location>
</feature>
<feature type="coiled-coil region" evidence="4">
    <location>
        <begin position="228"/>
        <end position="377"/>
    </location>
</feature>
<feature type="coiled-coil region" evidence="4">
    <location>
        <begin position="437"/>
        <end position="523"/>
    </location>
</feature>
<feature type="coiled-coil region" evidence="4">
    <location>
        <begin position="627"/>
        <end position="946"/>
    </location>
</feature>
<feature type="compositionally biased region" description="Basic and acidic residues" evidence="6">
    <location>
        <begin position="18"/>
        <end position="28"/>
    </location>
</feature>
<feature type="compositionally biased region" description="Polar residues" evidence="6">
    <location>
        <begin position="520"/>
        <end position="531"/>
    </location>
</feature>
<feature type="compositionally biased region" description="Basic and acidic residues" evidence="6">
    <location>
        <begin position="602"/>
        <end position="619"/>
    </location>
</feature>
<feature type="compositionally biased region" description="Basic and acidic residues" evidence="6">
    <location>
        <begin position="633"/>
        <end position="646"/>
    </location>
</feature>
<feature type="modified residue" description="N6-acetyllysine" evidence="2">
    <location>
        <position position="20"/>
    </location>
</feature>
<feature type="modified residue" description="Phosphoserine" evidence="3">
    <location>
        <position position="42"/>
    </location>
</feature>
<feature type="modified residue" description="N6-acetyllysine" evidence="3">
    <location>
        <position position="355"/>
    </location>
</feature>
<feature type="modified residue" description="N6-acetyllysine" evidence="2">
    <location>
        <position position="517"/>
    </location>
</feature>
<feature type="modified residue" description="Phosphoserine" evidence="3">
    <location>
        <position position="528"/>
    </location>
</feature>
<feature type="modified residue" description="Phosphoserine" evidence="2">
    <location>
        <position position="585"/>
    </location>
</feature>
<feature type="cross-link" description="Glycyl lysine isopeptide (Lys-Gly) (interchain with G-Cter in SUMO2)" evidence="1">
    <location>
        <position position="578"/>
    </location>
</feature>
<feature type="cross-link" description="Glycyl lysine isopeptide (Lys-Gly) (interchain with G-Cter in SUMO2)" evidence="1">
    <location>
        <position position="579"/>
    </location>
</feature>
<keyword id="KW-0007">Acetylation</keyword>
<keyword id="KW-0156">Chromatin regulator</keyword>
<keyword id="KW-0175">Coiled coil</keyword>
<keyword id="KW-1017">Isopeptide bond</keyword>
<keyword id="KW-0479">Metal-binding</keyword>
<keyword id="KW-0539">Nucleus</keyword>
<keyword id="KW-0597">Phosphoprotein</keyword>
<keyword id="KW-1185">Reference proteome</keyword>
<keyword id="KW-0808">Transferase</keyword>
<keyword id="KW-0832">Ubl conjugation</keyword>
<keyword id="KW-0833">Ubl conjugation pathway</keyword>
<keyword id="KW-0862">Zinc</keyword>
<keyword id="KW-0863">Zinc-finger</keyword>
<protein>
    <recommendedName>
        <fullName>E3 ubiquitin-protein ligase BRE1B</fullName>
        <shortName>BRE1-B</shortName>
        <ecNumber evidence="1">2.3.2.27</ecNumber>
    </recommendedName>
    <alternativeName>
        <fullName>RING finger protein 40</fullName>
    </alternativeName>
    <alternativeName>
        <fullName evidence="7">RING-type E3 ubiquitin transferase BRE1B</fullName>
    </alternativeName>
</protein>
<comment type="function">
    <text evidence="1">Component of the RNF20/40 E3 ubiquitin-protein ligase complex that mediates monoubiquitination of 'Lys-120' of histone H2B (H2BK120ub1). H2BK120ub1 gives a specific tag for epigenetic transcriptional activation and is also prerequisite for histone H3 'Lys-4' and 'Lys-79' methylation (H3K4me and H3K79me, respectively). It thereby plays a central role in histone code and gene regulation. The RNF20/40 complex forms a H2B ubiquitin ligase complex in cooperation with the E2 enzyme UBE2A or UBE2B; reports about the cooperation with UBE2E1/UBCH are contradictory. Required for transcriptional activation of Hox genes.</text>
</comment>
<comment type="catalytic activity">
    <reaction evidence="1">
        <text>S-ubiquitinyl-[E2 ubiquitin-conjugating enzyme]-L-cysteine + [acceptor protein]-L-lysine = [E2 ubiquitin-conjugating enzyme]-L-cysteine + N(6)-ubiquitinyl-[acceptor protein]-L-lysine.</text>
        <dbReference type="EC" id="2.3.2.27"/>
    </reaction>
</comment>
<comment type="pathway">
    <text>Protein modification; protein ubiquitination.</text>
</comment>
<comment type="subunit">
    <text evidence="1">Component of the RNF20/40 complex (also known as BRE1 complex) probably composed of 2 copies of RNF20/BRE1A and 2 copies of RNF40/BRE1B. Interacts with UBE2E1/UBCH6. Interacts with RB1 and WAC.</text>
</comment>
<comment type="subcellular location">
    <subcellularLocation>
        <location evidence="1">Nucleus</location>
    </subcellularLocation>
</comment>
<comment type="similarity">
    <text evidence="7">Belongs to the BRE1 family.</text>
</comment>
<sequence length="1001" mass="113592">MSGLGNKRAAGDGGSGPPEKKLSREEKTTTTLIEPIRLGGISSTEEIDLKVLQFKNKKLAERLEQRQACEDELRERIEKLEKRQATDDATLLIVNRYWAQLDETVEALLRCHEGQGELSSAPEAPGTQEGPTCDGTPLPEPGTSELREPLPLQLRPPLSEPALAFVVALGASSSEEVELELQGRMEFSKAAVSHVVEASDRLQRRVEELCQRVYSRGDSEPLSEVARARTRELGRENRRLQDLATQLQEKHHRISLEYSELQDKVTSAETKVLEMETTVEDLQWDIEKLRKREQKLNKHLAEALEQLNSGYYVSGSSSGFQGGQITLSMQKFEMLNAELEENQELANSRMAELEKLQAELQGAVRTNERLKVALRSLPEEVVRETGEYRMLQAQFSLLYNESLQVKTQLDEARGLLLATKNSHLRHIEHMESDELGLQKKLRTEVIQLEDTLAQVRKEYEMLRIEFEQNLAANEQAGPINREMRHLISSLQNHNHQLKGDAQRYKRKLREVQAEIGKLRAQTSGSTHSTPNLGHPEDSGLSAPAPGKEEGGPGPVSTPDNRKEMAPVPGTTTTTTSVKKEELVPSEEDVQGLTLGAQGPSSRGREPEARPKRELREREGPGLGPPPVASALSRADREKAKVEEAKRKESELLKGLRAELKKAQESQKEMKLLLDMYKSAPKEQRDKVQLMAAERKAKAEVDELRSRIRELEERDRRESKKIADGDALRRIRQAEEQIEHLQRKLGATKQEEEALLSEMDVTGQAFEDMQEQNGRLLQQLREKDDANFKLMSERIKANQIHKLLREEKDELGEQVLGLKSQVDAQLLTVQKLEEKERALQGSLGGVEKELTLRSQALELNKRKAVEAAQLAEDLKVQLEHVQTRLREIQPCLAESRAAREKESFNLKRAQEDISRLRRKLEKQRKVEVYADADEILQEEIKEYKARLTCPCCNTRKKDAVLTKCFHVFCFECVRGRYEARQRKCPKCNAAFGAHDFHRIYIS</sequence>
<accession>Q4R7K7</accession>
<dbReference type="EC" id="2.3.2.27" evidence="1"/>
<dbReference type="EMBL" id="AB168810">
    <property type="protein sequence ID" value="BAE00915.1"/>
    <property type="molecule type" value="mRNA"/>
</dbReference>
<dbReference type="SMR" id="Q4R7K7"/>
<dbReference type="STRING" id="9541.ENSMFAP00000019782"/>
<dbReference type="eggNOG" id="KOG0978">
    <property type="taxonomic scope" value="Eukaryota"/>
</dbReference>
<dbReference type="UniPathway" id="UPA00143"/>
<dbReference type="Proteomes" id="UP000233100">
    <property type="component" value="Unplaced"/>
</dbReference>
<dbReference type="GO" id="GO:0033503">
    <property type="term" value="C:HULC complex"/>
    <property type="evidence" value="ECO:0000250"/>
    <property type="project" value="UniProtKB"/>
</dbReference>
<dbReference type="GO" id="GO:0005634">
    <property type="term" value="C:nucleus"/>
    <property type="evidence" value="ECO:0000250"/>
    <property type="project" value="UniProtKB"/>
</dbReference>
<dbReference type="GO" id="GO:0000151">
    <property type="term" value="C:ubiquitin ligase complex"/>
    <property type="evidence" value="ECO:0000250"/>
    <property type="project" value="UniProtKB"/>
</dbReference>
<dbReference type="GO" id="GO:0042803">
    <property type="term" value="F:protein homodimerization activity"/>
    <property type="evidence" value="ECO:0000250"/>
    <property type="project" value="UniProtKB"/>
</dbReference>
<dbReference type="GO" id="GO:0061630">
    <property type="term" value="F:ubiquitin protein ligase activity"/>
    <property type="evidence" value="ECO:0007669"/>
    <property type="project" value="TreeGrafter"/>
</dbReference>
<dbReference type="GO" id="GO:0031625">
    <property type="term" value="F:ubiquitin protein ligase binding"/>
    <property type="evidence" value="ECO:0000250"/>
    <property type="project" value="UniProtKB"/>
</dbReference>
<dbReference type="GO" id="GO:0008270">
    <property type="term" value="F:zinc ion binding"/>
    <property type="evidence" value="ECO:0007669"/>
    <property type="project" value="UniProtKB-KW"/>
</dbReference>
<dbReference type="GO" id="GO:0006325">
    <property type="term" value="P:chromatin organization"/>
    <property type="evidence" value="ECO:0007669"/>
    <property type="project" value="UniProtKB-KW"/>
</dbReference>
<dbReference type="GO" id="GO:0045944">
    <property type="term" value="P:positive regulation of transcription by RNA polymerase II"/>
    <property type="evidence" value="ECO:0000250"/>
    <property type="project" value="UniProtKB"/>
</dbReference>
<dbReference type="GO" id="GO:0016567">
    <property type="term" value="P:protein ubiquitination"/>
    <property type="evidence" value="ECO:0007669"/>
    <property type="project" value="UniProtKB-UniPathway"/>
</dbReference>
<dbReference type="CDD" id="cd16815">
    <property type="entry name" value="RING-HC_RNF40"/>
    <property type="match status" value="1"/>
</dbReference>
<dbReference type="FunFam" id="3.30.40.10:FF:000040">
    <property type="entry name" value="E3 ubiquitin protein ligase"/>
    <property type="match status" value="1"/>
</dbReference>
<dbReference type="Gene3D" id="3.30.40.10">
    <property type="entry name" value="Zinc/RING finger domain, C3HC4 (zinc finger)"/>
    <property type="match status" value="1"/>
</dbReference>
<dbReference type="InterPro" id="IPR013956">
    <property type="entry name" value="E3_ubiquit_lig_Bre1"/>
</dbReference>
<dbReference type="InterPro" id="IPR018957">
    <property type="entry name" value="Znf_C3HC4_RING-type"/>
</dbReference>
<dbReference type="InterPro" id="IPR001841">
    <property type="entry name" value="Znf_RING"/>
</dbReference>
<dbReference type="InterPro" id="IPR013083">
    <property type="entry name" value="Znf_RING/FYVE/PHD"/>
</dbReference>
<dbReference type="InterPro" id="IPR017907">
    <property type="entry name" value="Znf_RING_CS"/>
</dbReference>
<dbReference type="PANTHER" id="PTHR23163:SF4">
    <property type="entry name" value="E3 UBIQUITIN-PROTEIN LIGASE BRE1B"/>
    <property type="match status" value="1"/>
</dbReference>
<dbReference type="PANTHER" id="PTHR23163">
    <property type="entry name" value="RING FINGER PROTEIN-RELATED"/>
    <property type="match status" value="1"/>
</dbReference>
<dbReference type="Pfam" id="PF00097">
    <property type="entry name" value="zf-C3HC4"/>
    <property type="match status" value="1"/>
</dbReference>
<dbReference type="SMART" id="SM00184">
    <property type="entry name" value="RING"/>
    <property type="match status" value="1"/>
</dbReference>
<dbReference type="SUPFAM" id="SSF57850">
    <property type="entry name" value="RING/U-box"/>
    <property type="match status" value="1"/>
</dbReference>
<dbReference type="PROSITE" id="PS00518">
    <property type="entry name" value="ZF_RING_1"/>
    <property type="match status" value="1"/>
</dbReference>
<dbReference type="PROSITE" id="PS50089">
    <property type="entry name" value="ZF_RING_2"/>
    <property type="match status" value="1"/>
</dbReference>
<evidence type="ECO:0000250" key="1">
    <source>
        <dbReference type="UniProtKB" id="O75150"/>
    </source>
</evidence>
<evidence type="ECO:0000250" key="2">
    <source>
        <dbReference type="UniProtKB" id="Q3U319"/>
    </source>
</evidence>
<evidence type="ECO:0000250" key="3">
    <source>
        <dbReference type="UniProtKB" id="Q5VTR2"/>
    </source>
</evidence>
<evidence type="ECO:0000255" key="4"/>
<evidence type="ECO:0000255" key="5">
    <source>
        <dbReference type="PROSITE-ProRule" id="PRU00175"/>
    </source>
</evidence>
<evidence type="ECO:0000256" key="6">
    <source>
        <dbReference type="SAM" id="MobiDB-lite"/>
    </source>
</evidence>
<evidence type="ECO:0000305" key="7"/>